<protein>
    <recommendedName>
        <fullName>Cytochrome b</fullName>
    </recommendedName>
    <alternativeName>
        <fullName>Complex III subunit 3</fullName>
    </alternativeName>
    <alternativeName>
        <fullName>Complex III subunit III</fullName>
    </alternativeName>
    <alternativeName>
        <fullName>Cytochrome b-c1 complex subunit 3</fullName>
    </alternativeName>
    <alternativeName>
        <fullName>Ubiquinol-cytochrome-c reductase complex cytochrome b subunit</fullName>
    </alternativeName>
</protein>
<accession>Q7YD13</accession>
<gene>
    <name type="primary">MT-CYB</name>
    <name type="synonym">COB</name>
    <name type="synonym">CYTB</name>
    <name type="synonym">MTCYB</name>
</gene>
<proteinExistence type="inferred from homology"/>
<name>CYB_LONMO</name>
<reference key="1">
    <citation type="journal article" date="2004" name="J. Mammal.">
        <title>Phylogeny of the Lonchophyllini (Chiroptera: Phyllostomidae).</title>
        <authorList>
            <person name="Davalos L.M."/>
            <person name="Jansa S.A."/>
        </authorList>
    </citation>
    <scope>NUCLEOTIDE SEQUENCE [GENOMIC DNA]</scope>
</reference>
<organism>
    <name type="scientific">Lonchophylla mordax</name>
    <name type="common">Godman's nectar bat</name>
    <dbReference type="NCBI Taxonomy" id="190508"/>
    <lineage>
        <taxon>Eukaryota</taxon>
        <taxon>Metazoa</taxon>
        <taxon>Chordata</taxon>
        <taxon>Craniata</taxon>
        <taxon>Vertebrata</taxon>
        <taxon>Euteleostomi</taxon>
        <taxon>Mammalia</taxon>
        <taxon>Eutheria</taxon>
        <taxon>Laurasiatheria</taxon>
        <taxon>Chiroptera</taxon>
        <taxon>Yangochiroptera</taxon>
        <taxon>Phyllostomidae</taxon>
        <taxon>Lonchophyllinae</taxon>
        <taxon>Lonchophylla</taxon>
    </lineage>
</organism>
<comment type="function">
    <text evidence="2">Component of the ubiquinol-cytochrome c reductase complex (complex III or cytochrome b-c1 complex) that is part of the mitochondrial respiratory chain. The b-c1 complex mediates electron transfer from ubiquinol to cytochrome c. Contributes to the generation of a proton gradient across the mitochondrial membrane that is then used for ATP synthesis.</text>
</comment>
<comment type="cofactor">
    <cofactor evidence="2">
        <name>heme b</name>
        <dbReference type="ChEBI" id="CHEBI:60344"/>
    </cofactor>
    <text evidence="2">Binds 2 heme b groups non-covalently.</text>
</comment>
<comment type="subunit">
    <text evidence="2">The cytochrome bc1 complex contains 11 subunits: 3 respiratory subunits (MT-CYB, CYC1 and UQCRFS1), 2 core proteins (UQCRC1 and UQCRC2) and 6 low-molecular weight proteins (UQCRH/QCR6, UQCRB/QCR7, UQCRQ/QCR8, UQCR10/QCR9, UQCR11/QCR10 and a cleavage product of UQCRFS1). This cytochrome bc1 complex then forms a dimer.</text>
</comment>
<comment type="subcellular location">
    <subcellularLocation>
        <location evidence="2">Mitochondrion inner membrane</location>
        <topology evidence="2">Multi-pass membrane protein</topology>
    </subcellularLocation>
</comment>
<comment type="miscellaneous">
    <text evidence="1">Heme 1 (or BL or b562) is low-potential and absorbs at about 562 nm, and heme 2 (or BH or b566) is high-potential and absorbs at about 566 nm.</text>
</comment>
<comment type="similarity">
    <text evidence="3 4">Belongs to the cytochrome b family.</text>
</comment>
<comment type="caution">
    <text evidence="2">The full-length protein contains only eight transmembrane helices, not nine as predicted by bioinformatics tools.</text>
</comment>
<evidence type="ECO:0000250" key="1"/>
<evidence type="ECO:0000250" key="2">
    <source>
        <dbReference type="UniProtKB" id="P00157"/>
    </source>
</evidence>
<evidence type="ECO:0000255" key="3">
    <source>
        <dbReference type="PROSITE-ProRule" id="PRU00967"/>
    </source>
</evidence>
<evidence type="ECO:0000255" key="4">
    <source>
        <dbReference type="PROSITE-ProRule" id="PRU00968"/>
    </source>
</evidence>
<sequence length="379" mass="42772">MTNIRKTHPLLKILNNSFVDLPAPSSLSAWWNFGSLLGVCLTLQILTGLFLAMHYTADTATAFNSVAHICRDVNYGWLLRYLHANGASMFFICLYLHVGRGLYYGSYTYTETWNVGILLLFTVMATAFMGYVLPWGQMSFWGATVITNLLSAIPYIGTELVQWIWGGFSVDKATLTRFFTFHFLFPFIVAALVMVHLLFLHETGSNNPTGIPSDPDMIPFHPYYTIKDILGFLMMLTVLSTLVLFSPDLLGDPDNYTPANPLNTPPHIKPEWYFLFAYAILRSIPNKLGGVLALVLSILILAVMPVLHMSKQRSMMFRPLSQCLFWLLVAVLLTLTWIGGQPVEYPYVIIGQAASVLYFMILLILMPLVSIMENKLLKW</sequence>
<geneLocation type="mitochondrion"/>
<dbReference type="EMBL" id="AF423095">
    <property type="protein sequence ID" value="AAP80163.1"/>
    <property type="molecule type" value="Genomic_DNA"/>
</dbReference>
<dbReference type="SMR" id="Q7YD13"/>
<dbReference type="GO" id="GO:0005743">
    <property type="term" value="C:mitochondrial inner membrane"/>
    <property type="evidence" value="ECO:0007669"/>
    <property type="project" value="UniProtKB-SubCell"/>
</dbReference>
<dbReference type="GO" id="GO:0045275">
    <property type="term" value="C:respiratory chain complex III"/>
    <property type="evidence" value="ECO:0007669"/>
    <property type="project" value="InterPro"/>
</dbReference>
<dbReference type="GO" id="GO:0046872">
    <property type="term" value="F:metal ion binding"/>
    <property type="evidence" value="ECO:0007669"/>
    <property type="project" value="UniProtKB-KW"/>
</dbReference>
<dbReference type="GO" id="GO:0008121">
    <property type="term" value="F:ubiquinol-cytochrome-c reductase activity"/>
    <property type="evidence" value="ECO:0007669"/>
    <property type="project" value="InterPro"/>
</dbReference>
<dbReference type="GO" id="GO:0006122">
    <property type="term" value="P:mitochondrial electron transport, ubiquinol to cytochrome c"/>
    <property type="evidence" value="ECO:0007669"/>
    <property type="project" value="TreeGrafter"/>
</dbReference>
<dbReference type="CDD" id="cd00290">
    <property type="entry name" value="cytochrome_b_C"/>
    <property type="match status" value="1"/>
</dbReference>
<dbReference type="CDD" id="cd00284">
    <property type="entry name" value="Cytochrome_b_N"/>
    <property type="match status" value="1"/>
</dbReference>
<dbReference type="FunFam" id="1.20.810.10:FF:000002">
    <property type="entry name" value="Cytochrome b"/>
    <property type="match status" value="1"/>
</dbReference>
<dbReference type="Gene3D" id="1.20.810.10">
    <property type="entry name" value="Cytochrome Bc1 Complex, Chain C"/>
    <property type="match status" value="1"/>
</dbReference>
<dbReference type="InterPro" id="IPR005798">
    <property type="entry name" value="Cyt_b/b6_C"/>
</dbReference>
<dbReference type="InterPro" id="IPR036150">
    <property type="entry name" value="Cyt_b/b6_C_sf"/>
</dbReference>
<dbReference type="InterPro" id="IPR005797">
    <property type="entry name" value="Cyt_b/b6_N"/>
</dbReference>
<dbReference type="InterPro" id="IPR027387">
    <property type="entry name" value="Cytb/b6-like_sf"/>
</dbReference>
<dbReference type="InterPro" id="IPR030689">
    <property type="entry name" value="Cytochrome_b"/>
</dbReference>
<dbReference type="InterPro" id="IPR048260">
    <property type="entry name" value="Cytochrome_b_C_euk/bac"/>
</dbReference>
<dbReference type="InterPro" id="IPR048259">
    <property type="entry name" value="Cytochrome_b_N_euk/bac"/>
</dbReference>
<dbReference type="InterPro" id="IPR016174">
    <property type="entry name" value="Di-haem_cyt_TM"/>
</dbReference>
<dbReference type="PANTHER" id="PTHR19271">
    <property type="entry name" value="CYTOCHROME B"/>
    <property type="match status" value="1"/>
</dbReference>
<dbReference type="PANTHER" id="PTHR19271:SF16">
    <property type="entry name" value="CYTOCHROME B"/>
    <property type="match status" value="1"/>
</dbReference>
<dbReference type="Pfam" id="PF00032">
    <property type="entry name" value="Cytochrom_B_C"/>
    <property type="match status" value="1"/>
</dbReference>
<dbReference type="Pfam" id="PF00033">
    <property type="entry name" value="Cytochrome_B"/>
    <property type="match status" value="1"/>
</dbReference>
<dbReference type="PIRSF" id="PIRSF038885">
    <property type="entry name" value="COB"/>
    <property type="match status" value="1"/>
</dbReference>
<dbReference type="SUPFAM" id="SSF81648">
    <property type="entry name" value="a domain/subunit of cytochrome bc1 complex (Ubiquinol-cytochrome c reductase)"/>
    <property type="match status" value="1"/>
</dbReference>
<dbReference type="SUPFAM" id="SSF81342">
    <property type="entry name" value="Transmembrane di-heme cytochromes"/>
    <property type="match status" value="1"/>
</dbReference>
<dbReference type="PROSITE" id="PS51003">
    <property type="entry name" value="CYTB_CTER"/>
    <property type="match status" value="1"/>
</dbReference>
<dbReference type="PROSITE" id="PS51002">
    <property type="entry name" value="CYTB_NTER"/>
    <property type="match status" value="1"/>
</dbReference>
<keyword id="KW-0249">Electron transport</keyword>
<keyword id="KW-0349">Heme</keyword>
<keyword id="KW-0408">Iron</keyword>
<keyword id="KW-0472">Membrane</keyword>
<keyword id="KW-0479">Metal-binding</keyword>
<keyword id="KW-0496">Mitochondrion</keyword>
<keyword id="KW-0999">Mitochondrion inner membrane</keyword>
<keyword id="KW-0679">Respiratory chain</keyword>
<keyword id="KW-0812">Transmembrane</keyword>
<keyword id="KW-1133">Transmembrane helix</keyword>
<keyword id="KW-0813">Transport</keyword>
<keyword id="KW-0830">Ubiquinone</keyword>
<feature type="chain" id="PRO_0000254709" description="Cytochrome b">
    <location>
        <begin position="1"/>
        <end position="379"/>
    </location>
</feature>
<feature type="transmembrane region" description="Helical" evidence="2">
    <location>
        <begin position="33"/>
        <end position="53"/>
    </location>
</feature>
<feature type="transmembrane region" description="Helical" evidence="2">
    <location>
        <begin position="77"/>
        <end position="98"/>
    </location>
</feature>
<feature type="transmembrane region" description="Helical" evidence="2">
    <location>
        <begin position="113"/>
        <end position="133"/>
    </location>
</feature>
<feature type="transmembrane region" description="Helical" evidence="2">
    <location>
        <begin position="178"/>
        <end position="198"/>
    </location>
</feature>
<feature type="transmembrane region" description="Helical" evidence="2">
    <location>
        <begin position="226"/>
        <end position="246"/>
    </location>
</feature>
<feature type="transmembrane region" description="Helical" evidence="2">
    <location>
        <begin position="288"/>
        <end position="308"/>
    </location>
</feature>
<feature type="transmembrane region" description="Helical" evidence="2">
    <location>
        <begin position="320"/>
        <end position="340"/>
    </location>
</feature>
<feature type="transmembrane region" description="Helical" evidence="2">
    <location>
        <begin position="347"/>
        <end position="367"/>
    </location>
</feature>
<feature type="binding site" description="axial binding residue" evidence="2">
    <location>
        <position position="83"/>
    </location>
    <ligand>
        <name>heme b</name>
        <dbReference type="ChEBI" id="CHEBI:60344"/>
        <label>b562</label>
    </ligand>
    <ligandPart>
        <name>Fe</name>
        <dbReference type="ChEBI" id="CHEBI:18248"/>
    </ligandPart>
</feature>
<feature type="binding site" description="axial binding residue" evidence="2">
    <location>
        <position position="97"/>
    </location>
    <ligand>
        <name>heme b</name>
        <dbReference type="ChEBI" id="CHEBI:60344"/>
        <label>b566</label>
    </ligand>
    <ligandPart>
        <name>Fe</name>
        <dbReference type="ChEBI" id="CHEBI:18248"/>
    </ligandPart>
</feature>
<feature type="binding site" description="axial binding residue" evidence="2">
    <location>
        <position position="182"/>
    </location>
    <ligand>
        <name>heme b</name>
        <dbReference type="ChEBI" id="CHEBI:60344"/>
        <label>b562</label>
    </ligand>
    <ligandPart>
        <name>Fe</name>
        <dbReference type="ChEBI" id="CHEBI:18248"/>
    </ligandPart>
</feature>
<feature type="binding site" description="axial binding residue" evidence="2">
    <location>
        <position position="196"/>
    </location>
    <ligand>
        <name>heme b</name>
        <dbReference type="ChEBI" id="CHEBI:60344"/>
        <label>b566</label>
    </ligand>
    <ligandPart>
        <name>Fe</name>
        <dbReference type="ChEBI" id="CHEBI:18248"/>
    </ligandPart>
</feature>
<feature type="binding site" evidence="2">
    <location>
        <position position="201"/>
    </location>
    <ligand>
        <name>a ubiquinone</name>
        <dbReference type="ChEBI" id="CHEBI:16389"/>
    </ligand>
</feature>